<keyword id="KW-0687">Ribonucleoprotein</keyword>
<keyword id="KW-0689">Ribosomal protein</keyword>
<accession>Q4UMT0</accession>
<name>RS10_RICFE</name>
<proteinExistence type="inferred from homology"/>
<evidence type="ECO:0000255" key="1">
    <source>
        <dbReference type="HAMAP-Rule" id="MF_00508"/>
    </source>
</evidence>
<evidence type="ECO:0000305" key="2"/>
<protein>
    <recommendedName>
        <fullName evidence="1">Small ribosomal subunit protein uS10</fullName>
    </recommendedName>
    <alternativeName>
        <fullName evidence="2">30S ribosomal protein S10</fullName>
    </alternativeName>
</protein>
<comment type="function">
    <text evidence="1">Involved in the binding of tRNA to the ribosomes.</text>
</comment>
<comment type="subunit">
    <text evidence="1">Part of the 30S ribosomal subunit.</text>
</comment>
<comment type="similarity">
    <text evidence="1">Belongs to the universal ribosomal protein uS10 family.</text>
</comment>
<dbReference type="EMBL" id="CP000053">
    <property type="protein sequence ID" value="AAY61128.1"/>
    <property type="molecule type" value="Genomic_DNA"/>
</dbReference>
<dbReference type="SMR" id="Q4UMT0"/>
<dbReference type="STRING" id="315456.RF_0277"/>
<dbReference type="KEGG" id="rfe:RF_0277"/>
<dbReference type="eggNOG" id="COG0051">
    <property type="taxonomic scope" value="Bacteria"/>
</dbReference>
<dbReference type="HOGENOM" id="CLU_122625_1_3_5"/>
<dbReference type="OrthoDB" id="9804464at2"/>
<dbReference type="Proteomes" id="UP000008548">
    <property type="component" value="Chromosome"/>
</dbReference>
<dbReference type="GO" id="GO:1990904">
    <property type="term" value="C:ribonucleoprotein complex"/>
    <property type="evidence" value="ECO:0007669"/>
    <property type="project" value="UniProtKB-KW"/>
</dbReference>
<dbReference type="GO" id="GO:0005840">
    <property type="term" value="C:ribosome"/>
    <property type="evidence" value="ECO:0007669"/>
    <property type="project" value="UniProtKB-KW"/>
</dbReference>
<dbReference type="GO" id="GO:0003735">
    <property type="term" value="F:structural constituent of ribosome"/>
    <property type="evidence" value="ECO:0007669"/>
    <property type="project" value="InterPro"/>
</dbReference>
<dbReference type="GO" id="GO:0000049">
    <property type="term" value="F:tRNA binding"/>
    <property type="evidence" value="ECO:0007669"/>
    <property type="project" value="UniProtKB-UniRule"/>
</dbReference>
<dbReference type="GO" id="GO:0006412">
    <property type="term" value="P:translation"/>
    <property type="evidence" value="ECO:0007669"/>
    <property type="project" value="UniProtKB-UniRule"/>
</dbReference>
<dbReference type="FunFam" id="3.30.70.600:FF:000003">
    <property type="entry name" value="30S ribosomal protein S10"/>
    <property type="match status" value="1"/>
</dbReference>
<dbReference type="Gene3D" id="3.30.70.600">
    <property type="entry name" value="Ribosomal protein S10 domain"/>
    <property type="match status" value="1"/>
</dbReference>
<dbReference type="HAMAP" id="MF_00508">
    <property type="entry name" value="Ribosomal_uS10"/>
    <property type="match status" value="1"/>
</dbReference>
<dbReference type="InterPro" id="IPR001848">
    <property type="entry name" value="Ribosomal_uS10"/>
</dbReference>
<dbReference type="InterPro" id="IPR027486">
    <property type="entry name" value="Ribosomal_uS10_dom"/>
</dbReference>
<dbReference type="InterPro" id="IPR036838">
    <property type="entry name" value="Ribosomal_uS10_dom_sf"/>
</dbReference>
<dbReference type="NCBIfam" id="NF001861">
    <property type="entry name" value="PRK00596.1"/>
    <property type="match status" value="1"/>
</dbReference>
<dbReference type="NCBIfam" id="TIGR01049">
    <property type="entry name" value="rpsJ_bact"/>
    <property type="match status" value="1"/>
</dbReference>
<dbReference type="PANTHER" id="PTHR11700">
    <property type="entry name" value="30S RIBOSOMAL PROTEIN S10 FAMILY MEMBER"/>
    <property type="match status" value="1"/>
</dbReference>
<dbReference type="Pfam" id="PF00338">
    <property type="entry name" value="Ribosomal_S10"/>
    <property type="match status" value="1"/>
</dbReference>
<dbReference type="PRINTS" id="PR00971">
    <property type="entry name" value="RIBOSOMALS10"/>
</dbReference>
<dbReference type="SMART" id="SM01403">
    <property type="entry name" value="Ribosomal_S10"/>
    <property type="match status" value="1"/>
</dbReference>
<dbReference type="SUPFAM" id="SSF54999">
    <property type="entry name" value="Ribosomal protein S10"/>
    <property type="match status" value="1"/>
</dbReference>
<feature type="chain" id="PRO_0000237088" description="Small ribosomal subunit protein uS10">
    <location>
        <begin position="1"/>
        <end position="105"/>
    </location>
</feature>
<organism>
    <name type="scientific">Rickettsia felis (strain ATCC VR-1525 / URRWXCal2)</name>
    <name type="common">Rickettsia azadi</name>
    <dbReference type="NCBI Taxonomy" id="315456"/>
    <lineage>
        <taxon>Bacteria</taxon>
        <taxon>Pseudomonadati</taxon>
        <taxon>Pseudomonadota</taxon>
        <taxon>Alphaproteobacteria</taxon>
        <taxon>Rickettsiales</taxon>
        <taxon>Rickettsiaceae</taxon>
        <taxon>Rickettsieae</taxon>
        <taxon>Rickettsia</taxon>
        <taxon>spotted fever group</taxon>
    </lineage>
</organism>
<reference key="1">
    <citation type="journal article" date="2005" name="PLoS Biol.">
        <title>The genome sequence of Rickettsia felis identifies the first putative conjugative plasmid in an obligate intracellular parasite.</title>
        <authorList>
            <person name="Ogata H."/>
            <person name="Renesto P."/>
            <person name="Audic S."/>
            <person name="Robert C."/>
            <person name="Blanc G."/>
            <person name="Fournier P.-E."/>
            <person name="Parinello H."/>
            <person name="Claverie J.-M."/>
            <person name="Raoult D."/>
        </authorList>
    </citation>
    <scope>NUCLEOTIDE SEQUENCE [LARGE SCALE GENOMIC DNA]</scope>
    <source>
        <strain>ATCC VR-1525 / URRWXCal2</strain>
    </source>
</reference>
<sequence>MKNKIKIRLKSFDHRSLDQATKEIVSAVKRTFANINGPIPLPRKIERFTVNRSPHVHKKSREQFEIRKHKRLLVIDDPNPAVVDALSKVDLAAGVDVVIELESGE</sequence>
<gene>
    <name evidence="1" type="primary">rpsJ</name>
    <name type="ordered locus">RF_0277</name>
</gene>